<dbReference type="EMBL" id="Y00842">
    <property type="protein sequence ID" value="CAA68765.1"/>
    <property type="status" value="ALT_SEQ"/>
    <property type="molecule type" value="Genomic_DNA"/>
</dbReference>
<dbReference type="EMBL" id="CM000136">
    <property type="protein sequence ID" value="EAY80813.1"/>
    <property type="status" value="ALT_SEQ"/>
    <property type="molecule type" value="Genomic_DNA"/>
</dbReference>
<dbReference type="PIR" id="S01152">
    <property type="entry name" value="S01152"/>
</dbReference>
<dbReference type="STRING" id="39946.A2ZDX9"/>
<dbReference type="HOGENOM" id="CLU_060028_2_0_1"/>
<dbReference type="OrthoDB" id="2143914at2759"/>
<dbReference type="Proteomes" id="UP000007015">
    <property type="component" value="Chromosome 11"/>
</dbReference>
<dbReference type="GO" id="GO:0005829">
    <property type="term" value="C:cytosol"/>
    <property type="evidence" value="ECO:0007669"/>
    <property type="project" value="TreeGrafter"/>
</dbReference>
<dbReference type="GO" id="GO:0009631">
    <property type="term" value="P:cold acclimation"/>
    <property type="evidence" value="ECO:0007669"/>
    <property type="project" value="TreeGrafter"/>
</dbReference>
<dbReference type="GO" id="GO:0009737">
    <property type="term" value="P:response to abscisic acid"/>
    <property type="evidence" value="ECO:0007669"/>
    <property type="project" value="TreeGrafter"/>
</dbReference>
<dbReference type="GO" id="GO:0009414">
    <property type="term" value="P:response to water deprivation"/>
    <property type="evidence" value="ECO:0007669"/>
    <property type="project" value="TreeGrafter"/>
</dbReference>
<dbReference type="InterPro" id="IPR000167">
    <property type="entry name" value="Dehydrin"/>
</dbReference>
<dbReference type="InterPro" id="IPR030513">
    <property type="entry name" value="Dehydrin_CS"/>
</dbReference>
<dbReference type="PANTHER" id="PTHR33346:SF37">
    <property type="entry name" value="DEHYDRIN RAB16D"/>
    <property type="match status" value="1"/>
</dbReference>
<dbReference type="PANTHER" id="PTHR33346">
    <property type="entry name" value="DEHYDRIN XERO 2-RELATED"/>
    <property type="match status" value="1"/>
</dbReference>
<dbReference type="Pfam" id="PF00257">
    <property type="entry name" value="Dehydrin"/>
    <property type="match status" value="1"/>
</dbReference>
<dbReference type="PROSITE" id="PS00315">
    <property type="entry name" value="DEHYDRIN_1"/>
    <property type="match status" value="1"/>
</dbReference>
<dbReference type="PROSITE" id="PS00823">
    <property type="entry name" value="DEHYDRIN_2"/>
    <property type="match status" value="2"/>
</dbReference>
<keyword id="KW-0963">Cytoplasm</keyword>
<keyword id="KW-1185">Reference proteome</keyword>
<keyword id="KW-0677">Repeat</keyword>
<keyword id="KW-0346">Stress response</keyword>
<sequence length="172" mass="17326">MEHQGQHGHVTSRVDEYGNPVGTGAGHGQMGTAGMGTHGTTGGMGTHGTTGGMGTHGTTGTGGGQFQPMREEHKTGGVLQRSGSSSSSSSEDDGMGGRRKKGIKEKIKEKLPGGNKGEQQHAMGGTGGAYGQQGHGTGMTTGTTGAHGTTTTDTGEKKGIMDKIKEKLPGQH</sequence>
<comment type="subcellular location">
    <subcellularLocation>
        <location evidence="2">Cytoplasm</location>
    </subcellularLocation>
</comment>
<comment type="induction">
    <text evidence="2">By abscisic acid (ABA) and water stress.</text>
</comment>
<comment type="similarity">
    <text evidence="3">Belongs to the plant dehydrin family.</text>
</comment>
<comment type="sequence caution" evidence="3">
    <conflict type="erroneous gene model prediction">
        <sequence resource="EMBL-CDS" id="CAA68765"/>
    </conflict>
</comment>
<comment type="sequence caution" evidence="3">
    <conflict type="erroneous gene model prediction">
        <sequence resource="EMBL-CDS" id="EAY80813"/>
    </conflict>
</comment>
<organism>
    <name type="scientific">Oryza sativa subsp. indica</name>
    <name type="common">Rice</name>
    <dbReference type="NCBI Taxonomy" id="39946"/>
    <lineage>
        <taxon>Eukaryota</taxon>
        <taxon>Viridiplantae</taxon>
        <taxon>Streptophyta</taxon>
        <taxon>Embryophyta</taxon>
        <taxon>Tracheophyta</taxon>
        <taxon>Spermatophyta</taxon>
        <taxon>Magnoliopsida</taxon>
        <taxon>Liliopsida</taxon>
        <taxon>Poales</taxon>
        <taxon>Poaceae</taxon>
        <taxon>BOP clade</taxon>
        <taxon>Oryzoideae</taxon>
        <taxon>Oryzeae</taxon>
        <taxon>Oryzinae</taxon>
        <taxon>Oryza</taxon>
        <taxon>Oryza sativa</taxon>
    </lineage>
</organism>
<reference key="1">
    <citation type="journal article" date="1988" name="EMBO J.">
        <title>Abscisic acid and water-stress induce the expression of a novel rice gene.</title>
        <authorList>
            <person name="Mundy J.W."/>
            <person name="Chua N.-H."/>
        </authorList>
    </citation>
    <scope>NUCLEOTIDE SEQUENCE [GENOMIC DNA]</scope>
    <scope>SUBCELLULAR LOCATION</scope>
    <scope>INDUCTION</scope>
    <source>
        <strain>cv. IR36</strain>
        <tissue>Seed</tissue>
    </source>
</reference>
<reference key="2">
    <citation type="journal article" date="2005" name="PLoS Biol.">
        <title>The genomes of Oryza sativa: a history of duplications.</title>
        <authorList>
            <person name="Yu J."/>
            <person name="Wang J."/>
            <person name="Lin W."/>
            <person name="Li S."/>
            <person name="Li H."/>
            <person name="Zhou J."/>
            <person name="Ni P."/>
            <person name="Dong W."/>
            <person name="Hu S."/>
            <person name="Zeng C."/>
            <person name="Zhang J."/>
            <person name="Zhang Y."/>
            <person name="Li R."/>
            <person name="Xu Z."/>
            <person name="Li S."/>
            <person name="Li X."/>
            <person name="Zheng H."/>
            <person name="Cong L."/>
            <person name="Lin L."/>
            <person name="Yin J."/>
            <person name="Geng J."/>
            <person name="Li G."/>
            <person name="Shi J."/>
            <person name="Liu J."/>
            <person name="Lv H."/>
            <person name="Li J."/>
            <person name="Wang J."/>
            <person name="Deng Y."/>
            <person name="Ran L."/>
            <person name="Shi X."/>
            <person name="Wang X."/>
            <person name="Wu Q."/>
            <person name="Li C."/>
            <person name="Ren X."/>
            <person name="Wang J."/>
            <person name="Wang X."/>
            <person name="Li D."/>
            <person name="Liu D."/>
            <person name="Zhang X."/>
            <person name="Ji Z."/>
            <person name="Zhao W."/>
            <person name="Sun Y."/>
            <person name="Zhang Z."/>
            <person name="Bao J."/>
            <person name="Han Y."/>
            <person name="Dong L."/>
            <person name="Ji J."/>
            <person name="Chen P."/>
            <person name="Wu S."/>
            <person name="Liu J."/>
            <person name="Xiao Y."/>
            <person name="Bu D."/>
            <person name="Tan J."/>
            <person name="Yang L."/>
            <person name="Ye C."/>
            <person name="Zhang J."/>
            <person name="Xu J."/>
            <person name="Zhou Y."/>
            <person name="Yu Y."/>
            <person name="Zhang B."/>
            <person name="Zhuang S."/>
            <person name="Wei H."/>
            <person name="Liu B."/>
            <person name="Lei M."/>
            <person name="Yu H."/>
            <person name="Li Y."/>
            <person name="Xu H."/>
            <person name="Wei S."/>
            <person name="He X."/>
            <person name="Fang L."/>
            <person name="Zhang Z."/>
            <person name="Zhang Y."/>
            <person name="Huang X."/>
            <person name="Su Z."/>
            <person name="Tong W."/>
            <person name="Li J."/>
            <person name="Tong Z."/>
            <person name="Li S."/>
            <person name="Ye J."/>
            <person name="Wang L."/>
            <person name="Fang L."/>
            <person name="Lei T."/>
            <person name="Chen C.-S."/>
            <person name="Chen H.-C."/>
            <person name="Xu Z."/>
            <person name="Li H."/>
            <person name="Huang H."/>
            <person name="Zhang F."/>
            <person name="Xu H."/>
            <person name="Li N."/>
            <person name="Zhao C."/>
            <person name="Li S."/>
            <person name="Dong L."/>
            <person name="Huang Y."/>
            <person name="Li L."/>
            <person name="Xi Y."/>
            <person name="Qi Q."/>
            <person name="Li W."/>
            <person name="Zhang B."/>
            <person name="Hu W."/>
            <person name="Zhang Y."/>
            <person name="Tian X."/>
            <person name="Jiao Y."/>
            <person name="Liang X."/>
            <person name="Jin J."/>
            <person name="Gao L."/>
            <person name="Zheng W."/>
            <person name="Hao B."/>
            <person name="Liu S.-M."/>
            <person name="Wang W."/>
            <person name="Yuan L."/>
            <person name="Cao M."/>
            <person name="McDermott J."/>
            <person name="Samudrala R."/>
            <person name="Wang J."/>
            <person name="Wong G.K.-S."/>
            <person name="Yang H."/>
        </authorList>
    </citation>
    <scope>NUCLEOTIDE SEQUENCE [LARGE SCALE GENOMIC DNA]</scope>
    <source>
        <strain>cv. 93-11</strain>
    </source>
</reference>
<accession>A2ZDX9</accession>
<accession>P12253</accession>
<accession>Q53L95</accession>
<proteinExistence type="evidence at transcript level"/>
<evidence type="ECO:0000256" key="1">
    <source>
        <dbReference type="SAM" id="MobiDB-lite"/>
    </source>
</evidence>
<evidence type="ECO:0000269" key="2">
    <source>
    </source>
</evidence>
<evidence type="ECO:0000305" key="3"/>
<feature type="chain" id="PRO_0000295016" description="Water stress-inducible protein Rab21">
    <location>
        <begin position="1"/>
        <end position="172"/>
    </location>
</feature>
<feature type="repeat" description="Type A">
    <location>
        <begin position="3"/>
        <end position="28"/>
    </location>
</feature>
<feature type="repeat" description="Type B">
    <location>
        <begin position="98"/>
        <end position="115"/>
    </location>
</feature>
<feature type="repeat" description="Type A">
    <location>
        <begin position="125"/>
        <end position="149"/>
    </location>
</feature>
<feature type="repeat" description="Type B">
    <location>
        <begin position="156"/>
        <end position="172"/>
    </location>
</feature>
<feature type="region of interest" description="Disordered" evidence="1">
    <location>
        <begin position="1"/>
        <end position="172"/>
    </location>
</feature>
<feature type="compositionally biased region" description="Gly residues" evidence="1">
    <location>
        <begin position="21"/>
        <end position="65"/>
    </location>
</feature>
<feature type="compositionally biased region" description="Gly residues" evidence="1">
    <location>
        <begin position="124"/>
        <end position="139"/>
    </location>
</feature>
<feature type="compositionally biased region" description="Low complexity" evidence="1">
    <location>
        <begin position="140"/>
        <end position="153"/>
    </location>
</feature>
<feature type="compositionally biased region" description="Basic and acidic residues" evidence="1">
    <location>
        <begin position="154"/>
        <end position="172"/>
    </location>
</feature>
<feature type="sequence conflict" description="In Ref. 1; CAA68765." evidence="3" ref="1">
    <original>G</original>
    <variation>A</variation>
    <location>
        <position position="28"/>
    </location>
</feature>
<feature type="sequence conflict" description="In Ref. 1; CAA68765." evidence="3" ref="1">
    <original>T</original>
    <variation>A</variation>
    <location>
        <position position="41"/>
    </location>
</feature>
<feature type="sequence conflict" description="In Ref. 1; CAA68765." evidence="3" ref="1">
    <original>G</original>
    <variation>R</variation>
    <location>
        <position position="64"/>
    </location>
</feature>
<protein>
    <recommendedName>
        <fullName>Water stress-inducible protein Rab21</fullName>
    </recommendedName>
</protein>
<name>DHR21_ORYSI</name>
<gene>
    <name type="primary">RAB21</name>
    <name type="ORF">OsI_034772</name>
</gene>